<proteinExistence type="inferred from homology"/>
<evidence type="ECO:0000255" key="1">
    <source>
        <dbReference type="HAMAP-Rule" id="MF_01008"/>
    </source>
</evidence>
<evidence type="ECO:0000255" key="2">
    <source>
        <dbReference type="PROSITE-ProRule" id="PRU01076"/>
    </source>
</evidence>
<name>MRAZ_MYCGI</name>
<protein>
    <recommendedName>
        <fullName>Transcriptional regulator MraZ</fullName>
    </recommendedName>
</protein>
<sequence>MFFGTYTPKLDDKGRLTLPAKFRDALAGGLMVTKSQDHSLAVHPRAEFEEMIAEISAKAKRGNPQARAYLRNLAASTDEQYPDAQGRITLSPEHRRYANLTKDCVVTGSIDFLEIWDAQAWQEYQELHEENFSAASDEALGDIL</sequence>
<dbReference type="EMBL" id="CP000656">
    <property type="protein sequence ID" value="ABP45456.1"/>
    <property type="molecule type" value="Genomic_DNA"/>
</dbReference>
<dbReference type="SMR" id="A4TBF5"/>
<dbReference type="STRING" id="350054.Mflv_2979"/>
<dbReference type="KEGG" id="mgi:Mflv_2979"/>
<dbReference type="eggNOG" id="COG2001">
    <property type="taxonomic scope" value="Bacteria"/>
</dbReference>
<dbReference type="HOGENOM" id="CLU_107907_0_5_11"/>
<dbReference type="OrthoDB" id="9807753at2"/>
<dbReference type="GO" id="GO:0005737">
    <property type="term" value="C:cytoplasm"/>
    <property type="evidence" value="ECO:0007669"/>
    <property type="project" value="UniProtKB-UniRule"/>
</dbReference>
<dbReference type="GO" id="GO:0009295">
    <property type="term" value="C:nucleoid"/>
    <property type="evidence" value="ECO:0007669"/>
    <property type="project" value="UniProtKB-SubCell"/>
</dbReference>
<dbReference type="GO" id="GO:0003700">
    <property type="term" value="F:DNA-binding transcription factor activity"/>
    <property type="evidence" value="ECO:0007669"/>
    <property type="project" value="UniProtKB-UniRule"/>
</dbReference>
<dbReference type="GO" id="GO:0000976">
    <property type="term" value="F:transcription cis-regulatory region binding"/>
    <property type="evidence" value="ECO:0007669"/>
    <property type="project" value="TreeGrafter"/>
</dbReference>
<dbReference type="GO" id="GO:2000143">
    <property type="term" value="P:negative regulation of DNA-templated transcription initiation"/>
    <property type="evidence" value="ECO:0007669"/>
    <property type="project" value="TreeGrafter"/>
</dbReference>
<dbReference type="CDD" id="cd16321">
    <property type="entry name" value="MraZ_C"/>
    <property type="match status" value="1"/>
</dbReference>
<dbReference type="CDD" id="cd16320">
    <property type="entry name" value="MraZ_N"/>
    <property type="match status" value="1"/>
</dbReference>
<dbReference type="Gene3D" id="3.40.1550.20">
    <property type="entry name" value="Transcriptional regulator MraZ domain"/>
    <property type="match status" value="1"/>
</dbReference>
<dbReference type="HAMAP" id="MF_01008">
    <property type="entry name" value="MraZ"/>
    <property type="match status" value="1"/>
</dbReference>
<dbReference type="InterPro" id="IPR003444">
    <property type="entry name" value="MraZ"/>
</dbReference>
<dbReference type="InterPro" id="IPR035644">
    <property type="entry name" value="MraZ_C"/>
</dbReference>
<dbReference type="InterPro" id="IPR020603">
    <property type="entry name" value="MraZ_dom"/>
</dbReference>
<dbReference type="InterPro" id="IPR035642">
    <property type="entry name" value="MraZ_N"/>
</dbReference>
<dbReference type="InterPro" id="IPR038619">
    <property type="entry name" value="MraZ_sf"/>
</dbReference>
<dbReference type="InterPro" id="IPR007159">
    <property type="entry name" value="SpoVT-AbrB_dom"/>
</dbReference>
<dbReference type="InterPro" id="IPR037914">
    <property type="entry name" value="SpoVT-AbrB_sf"/>
</dbReference>
<dbReference type="PANTHER" id="PTHR34701">
    <property type="entry name" value="TRANSCRIPTIONAL REGULATOR MRAZ"/>
    <property type="match status" value="1"/>
</dbReference>
<dbReference type="PANTHER" id="PTHR34701:SF1">
    <property type="entry name" value="TRANSCRIPTIONAL REGULATOR MRAZ"/>
    <property type="match status" value="1"/>
</dbReference>
<dbReference type="Pfam" id="PF02381">
    <property type="entry name" value="MraZ"/>
    <property type="match status" value="2"/>
</dbReference>
<dbReference type="SUPFAM" id="SSF89447">
    <property type="entry name" value="AbrB/MazE/MraZ-like"/>
    <property type="match status" value="1"/>
</dbReference>
<dbReference type="PROSITE" id="PS51740">
    <property type="entry name" value="SPOVT_ABRB"/>
    <property type="match status" value="2"/>
</dbReference>
<comment type="subunit">
    <text evidence="1">Forms oligomers.</text>
</comment>
<comment type="subcellular location">
    <subcellularLocation>
        <location evidence="1">Cytoplasm</location>
        <location evidence="1">Nucleoid</location>
    </subcellularLocation>
</comment>
<comment type="similarity">
    <text evidence="1">Belongs to the MraZ family.</text>
</comment>
<gene>
    <name evidence="1" type="primary">mraZ</name>
    <name type="ordered locus">Mflv_2979</name>
</gene>
<organism>
    <name type="scientific">Mycolicibacterium gilvum (strain PYR-GCK)</name>
    <name type="common">Mycobacterium gilvum (strain PYR-GCK)</name>
    <dbReference type="NCBI Taxonomy" id="350054"/>
    <lineage>
        <taxon>Bacteria</taxon>
        <taxon>Bacillati</taxon>
        <taxon>Actinomycetota</taxon>
        <taxon>Actinomycetes</taxon>
        <taxon>Mycobacteriales</taxon>
        <taxon>Mycobacteriaceae</taxon>
        <taxon>Mycolicibacterium</taxon>
    </lineage>
</organism>
<accession>A4TBF5</accession>
<feature type="chain" id="PRO_1000084010" description="Transcriptional regulator MraZ">
    <location>
        <begin position="1"/>
        <end position="144"/>
    </location>
</feature>
<feature type="domain" description="SpoVT-AbrB 1" evidence="2">
    <location>
        <begin position="5"/>
        <end position="47"/>
    </location>
</feature>
<feature type="domain" description="SpoVT-AbrB 2" evidence="2">
    <location>
        <begin position="77"/>
        <end position="120"/>
    </location>
</feature>
<reference key="1">
    <citation type="submission" date="2007-04" db="EMBL/GenBank/DDBJ databases">
        <title>Complete sequence of chromosome of Mycobacterium gilvum PYR-GCK.</title>
        <authorList>
            <consortium name="US DOE Joint Genome Institute"/>
            <person name="Copeland A."/>
            <person name="Lucas S."/>
            <person name="Lapidus A."/>
            <person name="Barry K."/>
            <person name="Detter J.C."/>
            <person name="Glavina del Rio T."/>
            <person name="Hammon N."/>
            <person name="Israni S."/>
            <person name="Dalin E."/>
            <person name="Tice H."/>
            <person name="Pitluck S."/>
            <person name="Chain P."/>
            <person name="Malfatti S."/>
            <person name="Shin M."/>
            <person name="Vergez L."/>
            <person name="Schmutz J."/>
            <person name="Larimer F."/>
            <person name="Land M."/>
            <person name="Hauser L."/>
            <person name="Kyrpides N."/>
            <person name="Mikhailova N."/>
            <person name="Miller C."/>
            <person name="Richardson P."/>
        </authorList>
    </citation>
    <scope>NUCLEOTIDE SEQUENCE [LARGE SCALE GENOMIC DNA]</scope>
    <source>
        <strain>PYR-GCK</strain>
    </source>
</reference>
<keyword id="KW-0963">Cytoplasm</keyword>
<keyword id="KW-0238">DNA-binding</keyword>
<keyword id="KW-0677">Repeat</keyword>
<keyword id="KW-0804">Transcription</keyword>
<keyword id="KW-0805">Transcription regulation</keyword>